<protein>
    <recommendedName>
        <fullName evidence="1">Large ribosomal subunit protein eL15</fullName>
    </recommendedName>
    <alternativeName>
        <fullName>50S ribosomal protein L15e</fullName>
    </alternativeName>
</protein>
<keyword id="KW-1185">Reference proteome</keyword>
<keyword id="KW-0687">Ribonucleoprotein</keyword>
<keyword id="KW-0689">Ribosomal protein</keyword>
<proteinExistence type="inferred from homology"/>
<organism>
    <name type="scientific">Nanoarchaeum equitans (strain Kin4-M)</name>
    <dbReference type="NCBI Taxonomy" id="228908"/>
    <lineage>
        <taxon>Archaea</taxon>
        <taxon>Nanobdellota</taxon>
        <taxon>Candidatus Nanoarchaeia</taxon>
        <taxon>Nanoarchaeales</taxon>
        <taxon>Nanoarchaeaceae</taxon>
        <taxon>Nanoarchaeum</taxon>
    </lineage>
</organism>
<dbReference type="EMBL" id="AE017199">
    <property type="protein sequence ID" value="AAR39036.1"/>
    <property type="molecule type" value="Genomic_DNA"/>
</dbReference>
<dbReference type="SMR" id="Q74MN8"/>
<dbReference type="STRING" id="228908.NEQ181"/>
<dbReference type="EnsemblBacteria" id="AAR39036">
    <property type="protein sequence ID" value="AAR39036"/>
    <property type="gene ID" value="NEQ181"/>
</dbReference>
<dbReference type="KEGG" id="neq:NEQ181"/>
<dbReference type="PATRIC" id="fig|228908.8.peg.186"/>
<dbReference type="HOGENOM" id="CLU_080796_1_0_2"/>
<dbReference type="Proteomes" id="UP000000578">
    <property type="component" value="Chromosome"/>
</dbReference>
<dbReference type="GO" id="GO:0022625">
    <property type="term" value="C:cytosolic large ribosomal subunit"/>
    <property type="evidence" value="ECO:0007669"/>
    <property type="project" value="TreeGrafter"/>
</dbReference>
<dbReference type="GO" id="GO:0003723">
    <property type="term" value="F:RNA binding"/>
    <property type="evidence" value="ECO:0007669"/>
    <property type="project" value="TreeGrafter"/>
</dbReference>
<dbReference type="GO" id="GO:0003735">
    <property type="term" value="F:structural constituent of ribosome"/>
    <property type="evidence" value="ECO:0007669"/>
    <property type="project" value="InterPro"/>
</dbReference>
<dbReference type="GO" id="GO:0002181">
    <property type="term" value="P:cytoplasmic translation"/>
    <property type="evidence" value="ECO:0007669"/>
    <property type="project" value="TreeGrafter"/>
</dbReference>
<dbReference type="Gene3D" id="3.40.1120.10">
    <property type="entry name" value="Ribosomal protein l15e"/>
    <property type="match status" value="1"/>
</dbReference>
<dbReference type="InterPro" id="IPR024794">
    <property type="entry name" value="Rbsml_eL15_core_dom_sf"/>
</dbReference>
<dbReference type="InterPro" id="IPR000439">
    <property type="entry name" value="Ribosomal_eL15"/>
</dbReference>
<dbReference type="InterPro" id="IPR020925">
    <property type="entry name" value="Ribosomal_eL15_CS"/>
</dbReference>
<dbReference type="InterPro" id="IPR012678">
    <property type="entry name" value="Ribosomal_uL23/eL15/eS24_sf"/>
</dbReference>
<dbReference type="NCBIfam" id="NF003269">
    <property type="entry name" value="PRK04243.1"/>
    <property type="match status" value="1"/>
</dbReference>
<dbReference type="PANTHER" id="PTHR11847:SF4">
    <property type="entry name" value="LARGE RIBOSOMAL SUBUNIT PROTEIN EL15"/>
    <property type="match status" value="1"/>
</dbReference>
<dbReference type="PANTHER" id="PTHR11847">
    <property type="entry name" value="RIBOSOMAL PROTEIN L15"/>
    <property type="match status" value="1"/>
</dbReference>
<dbReference type="Pfam" id="PF00827">
    <property type="entry name" value="Ribosomal_L15e"/>
    <property type="match status" value="1"/>
</dbReference>
<dbReference type="SMART" id="SM01384">
    <property type="entry name" value="Ribosomal_L15e"/>
    <property type="match status" value="1"/>
</dbReference>
<dbReference type="SUPFAM" id="SSF54189">
    <property type="entry name" value="Ribosomal proteins S24e, L23 and L15e"/>
    <property type="match status" value="1"/>
</dbReference>
<dbReference type="PROSITE" id="PS01194">
    <property type="entry name" value="RIBOSOMAL_L15E"/>
    <property type="match status" value="1"/>
</dbReference>
<accession>Q74MN8</accession>
<comment type="similarity">
    <text evidence="1">Belongs to the eukaryotic ribosomal protein eL15 family.</text>
</comment>
<reference key="1">
    <citation type="journal article" date="2003" name="Proc. Natl. Acad. Sci. U.S.A.">
        <title>The genome of Nanoarchaeum equitans: insights into early archaeal evolution and derived parasitism.</title>
        <authorList>
            <person name="Waters E."/>
            <person name="Hohn M.J."/>
            <person name="Ahel I."/>
            <person name="Graham D.E."/>
            <person name="Adams M.D."/>
            <person name="Barnstead M."/>
            <person name="Beeson K.Y."/>
            <person name="Bibbs L."/>
            <person name="Bolanos R."/>
            <person name="Keller M."/>
            <person name="Kretz K."/>
            <person name="Lin X."/>
            <person name="Mathur E."/>
            <person name="Ni J."/>
            <person name="Podar M."/>
            <person name="Richardson T."/>
            <person name="Sutton G.G."/>
            <person name="Simon M."/>
            <person name="Soell D."/>
            <person name="Stetter K.O."/>
            <person name="Short J.M."/>
            <person name="Noorderwier M."/>
        </authorList>
    </citation>
    <scope>NUCLEOTIDE SEQUENCE [LARGE SCALE GENOMIC DNA]</scope>
    <source>
        <strain>Kin4-M</strain>
    </source>
</reference>
<feature type="chain" id="PRO_0000127578" description="Large ribosomal subunit protein eL15">
    <location>
        <begin position="1"/>
        <end position="190"/>
    </location>
</feature>
<name>RL15E_NANEQ</name>
<gene>
    <name type="primary">rpl15e</name>
    <name type="ordered locus">NEQ181</name>
</gene>
<sequence length="190" mass="22652">MGLYQYVRALYKDPKEFLGELYKQRIQQWRREPPIVEVERPTRIDRARALGYKPLPGIKIVRVRVRKGTRKREEIKGGRRPKAEYRIRPLGVNLQWIAEERANRLHRNMEVLGSYWVGEDGLYKWYEVILVDPFNPNIYNRPEYVWLLQKNQRGRVFRGKTSSARKFRGLRNGGLGAEKVRPSKRANFKD</sequence>
<evidence type="ECO:0000305" key="1"/>